<sequence>MSAGQRPAPKFPLRLDQVKPAGRSGAAPLLRPQRPLHQAATERGRGTTPAGLGLDSHLVRERMLARLQAEGVRDARVLAAMRAVPRHSFVDTALANQAYEDTSLPIGLGQTISKPSVVARMIELMLALQPAGARPRLLEIGSGCGYQAAVLAQLARQVVSIERLRPLYDKARENLAPLNFGNLRLVYGDGRIGHAPNAPYDGIIAAAGGEDIPQPWIDQLGPGGRLVAPMLDARSGGQVLVVIDRHADGNLVRSLHEAVRFVPLKSGTD</sequence>
<accession>A2SF76</accession>
<feature type="chain" id="PRO_0000351878" description="Protein-L-isoaspartate O-methyltransferase">
    <location>
        <begin position="1"/>
        <end position="269"/>
    </location>
</feature>
<feature type="region of interest" description="Disordered" evidence="2">
    <location>
        <begin position="1"/>
        <end position="53"/>
    </location>
</feature>
<feature type="active site" evidence="1">
    <location>
        <position position="113"/>
    </location>
</feature>
<reference key="1">
    <citation type="journal article" date="2007" name="J. Bacteriol.">
        <title>Whole-genome analysis of the methyl tert-butyl ether-degrading beta-proteobacterium Methylibium petroleiphilum PM1.</title>
        <authorList>
            <person name="Kane S.R."/>
            <person name="Chakicherla A.Y."/>
            <person name="Chain P.S.G."/>
            <person name="Schmidt R."/>
            <person name="Shin M.W."/>
            <person name="Legler T.C."/>
            <person name="Scow K.M."/>
            <person name="Larimer F.W."/>
            <person name="Lucas S.M."/>
            <person name="Richardson P.M."/>
            <person name="Hristova K.R."/>
        </authorList>
    </citation>
    <scope>NUCLEOTIDE SEQUENCE [LARGE SCALE GENOMIC DNA]</scope>
    <source>
        <strain>ATCC BAA-1232 / LMG 22953 / PM1</strain>
    </source>
</reference>
<comment type="function">
    <text evidence="1">Catalyzes the methyl esterification of L-isoaspartyl residues in peptides and proteins that result from spontaneous decomposition of normal L-aspartyl and L-asparaginyl residues. It plays a role in the repair and/or degradation of damaged proteins.</text>
</comment>
<comment type="catalytic activity">
    <reaction evidence="1">
        <text>[protein]-L-isoaspartate + S-adenosyl-L-methionine = [protein]-L-isoaspartate alpha-methyl ester + S-adenosyl-L-homocysteine</text>
        <dbReference type="Rhea" id="RHEA:12705"/>
        <dbReference type="Rhea" id="RHEA-COMP:12143"/>
        <dbReference type="Rhea" id="RHEA-COMP:12144"/>
        <dbReference type="ChEBI" id="CHEBI:57856"/>
        <dbReference type="ChEBI" id="CHEBI:59789"/>
        <dbReference type="ChEBI" id="CHEBI:90596"/>
        <dbReference type="ChEBI" id="CHEBI:90598"/>
        <dbReference type="EC" id="2.1.1.77"/>
    </reaction>
</comment>
<comment type="subcellular location">
    <subcellularLocation>
        <location evidence="1">Cytoplasm</location>
    </subcellularLocation>
</comment>
<comment type="similarity">
    <text evidence="1">Belongs to the methyltransferase superfamily. L-isoaspartyl/D-aspartyl protein methyltransferase family.</text>
</comment>
<gene>
    <name evidence="1" type="primary">pcm</name>
    <name type="ordered locus">Mpe_A1253</name>
</gene>
<dbReference type="EC" id="2.1.1.77" evidence="1"/>
<dbReference type="EMBL" id="CP000555">
    <property type="protein sequence ID" value="ABM94215.1"/>
    <property type="molecule type" value="Genomic_DNA"/>
</dbReference>
<dbReference type="RefSeq" id="WP_011828852.1">
    <property type="nucleotide sequence ID" value="NC_008825.1"/>
</dbReference>
<dbReference type="SMR" id="A2SF76"/>
<dbReference type="STRING" id="420662.Mpe_A1253"/>
<dbReference type="KEGG" id="mpt:Mpe_A1253"/>
<dbReference type="eggNOG" id="COG2518">
    <property type="taxonomic scope" value="Bacteria"/>
</dbReference>
<dbReference type="HOGENOM" id="CLU_055432_2_0_4"/>
<dbReference type="Proteomes" id="UP000000366">
    <property type="component" value="Chromosome"/>
</dbReference>
<dbReference type="GO" id="GO:0005737">
    <property type="term" value="C:cytoplasm"/>
    <property type="evidence" value="ECO:0007669"/>
    <property type="project" value="UniProtKB-SubCell"/>
</dbReference>
<dbReference type="GO" id="GO:0004719">
    <property type="term" value="F:protein-L-isoaspartate (D-aspartate) O-methyltransferase activity"/>
    <property type="evidence" value="ECO:0007669"/>
    <property type="project" value="UniProtKB-UniRule"/>
</dbReference>
<dbReference type="GO" id="GO:0032259">
    <property type="term" value="P:methylation"/>
    <property type="evidence" value="ECO:0007669"/>
    <property type="project" value="UniProtKB-KW"/>
</dbReference>
<dbReference type="GO" id="GO:0036211">
    <property type="term" value="P:protein modification process"/>
    <property type="evidence" value="ECO:0007669"/>
    <property type="project" value="UniProtKB-UniRule"/>
</dbReference>
<dbReference type="GO" id="GO:0030091">
    <property type="term" value="P:protein repair"/>
    <property type="evidence" value="ECO:0007669"/>
    <property type="project" value="UniProtKB-UniRule"/>
</dbReference>
<dbReference type="CDD" id="cd02440">
    <property type="entry name" value="AdoMet_MTases"/>
    <property type="match status" value="1"/>
</dbReference>
<dbReference type="FunFam" id="3.40.50.150:FF:000010">
    <property type="entry name" value="Protein-L-isoaspartate O-methyltransferase"/>
    <property type="match status" value="1"/>
</dbReference>
<dbReference type="Gene3D" id="3.40.50.150">
    <property type="entry name" value="Vaccinia Virus protein VP39"/>
    <property type="match status" value="1"/>
</dbReference>
<dbReference type="HAMAP" id="MF_00090">
    <property type="entry name" value="PIMT"/>
    <property type="match status" value="1"/>
</dbReference>
<dbReference type="InterPro" id="IPR000682">
    <property type="entry name" value="PCMT"/>
</dbReference>
<dbReference type="InterPro" id="IPR029063">
    <property type="entry name" value="SAM-dependent_MTases_sf"/>
</dbReference>
<dbReference type="NCBIfam" id="TIGR00080">
    <property type="entry name" value="pimt"/>
    <property type="match status" value="1"/>
</dbReference>
<dbReference type="NCBIfam" id="NF001453">
    <property type="entry name" value="PRK00312.1"/>
    <property type="match status" value="1"/>
</dbReference>
<dbReference type="PANTHER" id="PTHR11579">
    <property type="entry name" value="PROTEIN-L-ISOASPARTATE O-METHYLTRANSFERASE"/>
    <property type="match status" value="1"/>
</dbReference>
<dbReference type="PANTHER" id="PTHR11579:SF0">
    <property type="entry name" value="PROTEIN-L-ISOASPARTATE(D-ASPARTATE) O-METHYLTRANSFERASE"/>
    <property type="match status" value="1"/>
</dbReference>
<dbReference type="Pfam" id="PF01135">
    <property type="entry name" value="PCMT"/>
    <property type="match status" value="1"/>
</dbReference>
<dbReference type="SUPFAM" id="SSF53335">
    <property type="entry name" value="S-adenosyl-L-methionine-dependent methyltransferases"/>
    <property type="match status" value="1"/>
</dbReference>
<evidence type="ECO:0000255" key="1">
    <source>
        <dbReference type="HAMAP-Rule" id="MF_00090"/>
    </source>
</evidence>
<evidence type="ECO:0000256" key="2">
    <source>
        <dbReference type="SAM" id="MobiDB-lite"/>
    </source>
</evidence>
<name>PIMT_METPP</name>
<keyword id="KW-0963">Cytoplasm</keyword>
<keyword id="KW-0489">Methyltransferase</keyword>
<keyword id="KW-1185">Reference proteome</keyword>
<keyword id="KW-0949">S-adenosyl-L-methionine</keyword>
<keyword id="KW-0808">Transferase</keyword>
<protein>
    <recommendedName>
        <fullName evidence="1">Protein-L-isoaspartate O-methyltransferase</fullName>
        <ecNumber evidence="1">2.1.1.77</ecNumber>
    </recommendedName>
    <alternativeName>
        <fullName evidence="1">L-isoaspartyl protein carboxyl methyltransferase</fullName>
    </alternativeName>
    <alternativeName>
        <fullName evidence="1">Protein L-isoaspartyl methyltransferase</fullName>
    </alternativeName>
    <alternativeName>
        <fullName evidence="1">Protein-beta-aspartate methyltransferase</fullName>
        <shortName evidence="1">PIMT</shortName>
    </alternativeName>
</protein>
<proteinExistence type="inferred from homology"/>
<organism>
    <name type="scientific">Methylibium petroleiphilum (strain ATCC BAA-1232 / LMG 22953 / PM1)</name>
    <dbReference type="NCBI Taxonomy" id="420662"/>
    <lineage>
        <taxon>Bacteria</taxon>
        <taxon>Pseudomonadati</taxon>
        <taxon>Pseudomonadota</taxon>
        <taxon>Betaproteobacteria</taxon>
        <taxon>Burkholderiales</taxon>
        <taxon>Sphaerotilaceae</taxon>
        <taxon>Methylibium</taxon>
    </lineage>
</organism>